<evidence type="ECO:0000250" key="1"/>
<evidence type="ECO:0000250" key="2">
    <source>
        <dbReference type="UniProtKB" id="Q38899"/>
    </source>
</evidence>
<evidence type="ECO:0000256" key="3">
    <source>
        <dbReference type="SAM" id="MobiDB-lite"/>
    </source>
</evidence>
<evidence type="ECO:0000305" key="4"/>
<evidence type="ECO:0000312" key="5">
    <source>
        <dbReference type="EMBL" id="EEC74646.1"/>
    </source>
</evidence>
<reference key="1">
    <citation type="journal article" date="2005" name="PLoS Biol.">
        <title>The genomes of Oryza sativa: a history of duplications.</title>
        <authorList>
            <person name="Yu J."/>
            <person name="Wang J."/>
            <person name="Lin W."/>
            <person name="Li S."/>
            <person name="Li H."/>
            <person name="Zhou J."/>
            <person name="Ni P."/>
            <person name="Dong W."/>
            <person name="Hu S."/>
            <person name="Zeng C."/>
            <person name="Zhang J."/>
            <person name="Zhang Y."/>
            <person name="Li R."/>
            <person name="Xu Z."/>
            <person name="Li S."/>
            <person name="Li X."/>
            <person name="Zheng H."/>
            <person name="Cong L."/>
            <person name="Lin L."/>
            <person name="Yin J."/>
            <person name="Geng J."/>
            <person name="Li G."/>
            <person name="Shi J."/>
            <person name="Liu J."/>
            <person name="Lv H."/>
            <person name="Li J."/>
            <person name="Wang J."/>
            <person name="Deng Y."/>
            <person name="Ran L."/>
            <person name="Shi X."/>
            <person name="Wang X."/>
            <person name="Wu Q."/>
            <person name="Li C."/>
            <person name="Ren X."/>
            <person name="Wang J."/>
            <person name="Wang X."/>
            <person name="Li D."/>
            <person name="Liu D."/>
            <person name="Zhang X."/>
            <person name="Ji Z."/>
            <person name="Zhao W."/>
            <person name="Sun Y."/>
            <person name="Zhang Z."/>
            <person name="Bao J."/>
            <person name="Han Y."/>
            <person name="Dong L."/>
            <person name="Ji J."/>
            <person name="Chen P."/>
            <person name="Wu S."/>
            <person name="Liu J."/>
            <person name="Xiao Y."/>
            <person name="Bu D."/>
            <person name="Tan J."/>
            <person name="Yang L."/>
            <person name="Ye C."/>
            <person name="Zhang J."/>
            <person name="Xu J."/>
            <person name="Zhou Y."/>
            <person name="Yu Y."/>
            <person name="Zhang B."/>
            <person name="Zhuang S."/>
            <person name="Wei H."/>
            <person name="Liu B."/>
            <person name="Lei M."/>
            <person name="Yu H."/>
            <person name="Li Y."/>
            <person name="Xu H."/>
            <person name="Wei S."/>
            <person name="He X."/>
            <person name="Fang L."/>
            <person name="Zhang Z."/>
            <person name="Zhang Y."/>
            <person name="Huang X."/>
            <person name="Su Z."/>
            <person name="Tong W."/>
            <person name="Li J."/>
            <person name="Tong Z."/>
            <person name="Li S."/>
            <person name="Ye J."/>
            <person name="Wang L."/>
            <person name="Fang L."/>
            <person name="Lei T."/>
            <person name="Chen C.-S."/>
            <person name="Chen H.-C."/>
            <person name="Xu Z."/>
            <person name="Li H."/>
            <person name="Huang H."/>
            <person name="Zhang F."/>
            <person name="Xu H."/>
            <person name="Li N."/>
            <person name="Zhao C."/>
            <person name="Li S."/>
            <person name="Dong L."/>
            <person name="Huang Y."/>
            <person name="Li L."/>
            <person name="Xi Y."/>
            <person name="Qi Q."/>
            <person name="Li W."/>
            <person name="Zhang B."/>
            <person name="Hu W."/>
            <person name="Zhang Y."/>
            <person name="Tian X."/>
            <person name="Jiao Y."/>
            <person name="Liang X."/>
            <person name="Jin J."/>
            <person name="Gao L."/>
            <person name="Zheng W."/>
            <person name="Hao B."/>
            <person name="Liu S.-M."/>
            <person name="Wang W."/>
            <person name="Yuan L."/>
            <person name="Cao M."/>
            <person name="McDermott J."/>
            <person name="Samudrala R."/>
            <person name="Wang J."/>
            <person name="Wong G.K.-S."/>
            <person name="Yang H."/>
        </authorList>
    </citation>
    <scope>NUCLEOTIDE SEQUENCE [LARGE SCALE GENOMIC DNA]</scope>
    <source>
        <strain>cv. 93-11</strain>
    </source>
</reference>
<organism evidence="5">
    <name type="scientific">Oryza sativa subsp. indica</name>
    <name type="common">Rice</name>
    <dbReference type="NCBI Taxonomy" id="39946"/>
    <lineage>
        <taxon>Eukaryota</taxon>
        <taxon>Viridiplantae</taxon>
        <taxon>Streptophyta</taxon>
        <taxon>Embryophyta</taxon>
        <taxon>Tracheophyta</taxon>
        <taxon>Spermatophyta</taxon>
        <taxon>Magnoliopsida</taxon>
        <taxon>Liliopsida</taxon>
        <taxon>Poales</taxon>
        <taxon>Poaceae</taxon>
        <taxon>BOP clade</taxon>
        <taxon>Oryzoideae</taxon>
        <taxon>Oryzeae</taxon>
        <taxon>Oryzinae</taxon>
        <taxon>Oryza</taxon>
        <taxon>Oryza sativa</taxon>
    </lineage>
</organism>
<protein>
    <recommendedName>
        <fullName evidence="4">Origin of replication complex subunit 2</fullName>
        <shortName evidence="4">OsORC2</shortName>
    </recommendedName>
</protein>
<sequence length="379" mass="42590">MALRGGHAAAAAGVSSGSEDDDEEAGFSRSYFLAKEKEPSSGKKRARAAGKLSDLNLVDEQVLRASLAEIPPKHEREVEALTRSYKEQYRNWLFELRCGFGLLMYGFGSKKMLLEDFASTTLSDFTVIVVNGYLPSINLKQVIVTIAEIFWEQTKLKRKRQTATRSQLQPFASQSIDDIISFLNNQTSDNGDDNVCLLIHNIDGPALRDAESQQYLAQVSCCPQVHVVASVDHVNAPLLWDKKMVHTQFKWSWYHVPTFAPYKVEGVFYPLILASGGHAQTMKTALVVLQSLTPNAQSVFRVLAEYQLAHEKEEGMHFSSLYTKCRERFLVSSQVTLNSHLTEFKDHDLVKIRKHSDGQDCLHIPLVSDALEKLLQELT</sequence>
<accession>B8APQ0</accession>
<comment type="function">
    <text evidence="1 2">Essential protein (By similarity). Component of the origin recognition complex (ORC) that binds origins of replication. DNA-binding is ATP-dependent, however specific DNA sequences that define origins of replication have not been identified so far. ORC is required to assemble the pre-replication complex necessary to initiate DNA replication (By similarity).</text>
</comment>
<comment type="subunit">
    <text evidence="2">Component of the origin recognition complex (ORC) composed of at least ORC1, ORC2, ORC3, ORC4, ORC5 and ORC6. ORC is regulated in a cell-cycle and development dependent manner. It is sequentially assembled at the exit from anaphase of mitosis and disassembled as cells enter S phase.</text>
</comment>
<comment type="subcellular location">
    <subcellularLocation>
        <location evidence="4">Nucleus</location>
    </subcellularLocation>
</comment>
<comment type="similarity">
    <text evidence="4">Belongs to the ORC2 family.</text>
</comment>
<feature type="chain" id="PRO_0000431430" description="Origin of replication complex subunit 2">
    <location>
        <begin position="1"/>
        <end position="379"/>
    </location>
</feature>
<feature type="region of interest" description="Disordered" evidence="3">
    <location>
        <begin position="1"/>
        <end position="25"/>
    </location>
</feature>
<feature type="compositionally biased region" description="Low complexity" evidence="3">
    <location>
        <begin position="8"/>
        <end position="17"/>
    </location>
</feature>
<keyword id="KW-0235">DNA replication</keyword>
<keyword id="KW-0539">Nucleus</keyword>
<keyword id="KW-1185">Reference proteome</keyword>
<proteinExistence type="inferred from homology"/>
<gene>
    <name evidence="5" type="ORF">OsI_10291</name>
</gene>
<name>ORC2_ORYSI</name>
<dbReference type="EMBL" id="CM000128">
    <property type="protein sequence ID" value="EEC74646.1"/>
    <property type="molecule type" value="Genomic_DNA"/>
</dbReference>
<dbReference type="SMR" id="B8APQ0"/>
<dbReference type="STRING" id="39946.B8APQ0"/>
<dbReference type="EnsemblPlants" id="BGIOSGA011320-TA">
    <property type="protein sequence ID" value="BGIOSGA011320-PA"/>
    <property type="gene ID" value="BGIOSGA011320"/>
</dbReference>
<dbReference type="EnsemblPlants" id="OsGoSa_03g0006200.02">
    <property type="protein sequence ID" value="OsGoSa_03g0006200.02"/>
    <property type="gene ID" value="OsGoSa_03g0006200"/>
</dbReference>
<dbReference type="EnsemblPlants" id="OsIR64_03g0006160.01">
    <property type="protein sequence ID" value="OsIR64_03g0006160.01"/>
    <property type="gene ID" value="OsIR64_03g0006160"/>
</dbReference>
<dbReference type="EnsemblPlants" id="OsKYG_03g0006240.02">
    <property type="protein sequence ID" value="OsKYG_03g0006240.02"/>
    <property type="gene ID" value="OsKYG_03g0006240"/>
</dbReference>
<dbReference type="EnsemblPlants" id="OsLaMu_03g0006210.01">
    <property type="protein sequence ID" value="OsLaMu_03g0006210.01"/>
    <property type="gene ID" value="OsLaMu_03g0006210"/>
</dbReference>
<dbReference type="EnsemblPlants" id="OsLima_03g0006190.01">
    <property type="protein sequence ID" value="OsLima_03g0006190.01"/>
    <property type="gene ID" value="OsLima_03g0006190"/>
</dbReference>
<dbReference type="EnsemblPlants" id="OsLiXu_03g0006220.01">
    <property type="protein sequence ID" value="OsLiXu_03g0006220.01"/>
    <property type="gene ID" value="OsLiXu_03g0006220"/>
</dbReference>
<dbReference type="EnsemblPlants" id="OsMH63_03G006190_01">
    <property type="protein sequence ID" value="OsMH63_03G006190_01"/>
    <property type="gene ID" value="OsMH63_03G006190"/>
</dbReference>
<dbReference type="EnsemblPlants" id="OsPr106_03g0006230.01">
    <property type="protein sequence ID" value="OsPr106_03g0006230.01"/>
    <property type="gene ID" value="OsPr106_03g0006230"/>
</dbReference>
<dbReference type="EnsemblPlants" id="OsZS97_03G006040_01">
    <property type="protein sequence ID" value="OsZS97_03G006040_01"/>
    <property type="gene ID" value="OsZS97_03G006040"/>
</dbReference>
<dbReference type="Gramene" id="BGIOSGA011320-TA">
    <property type="protein sequence ID" value="BGIOSGA011320-PA"/>
    <property type="gene ID" value="BGIOSGA011320"/>
</dbReference>
<dbReference type="Gramene" id="OsGoSa_03g0006200.02">
    <property type="protein sequence ID" value="OsGoSa_03g0006200.02"/>
    <property type="gene ID" value="OsGoSa_03g0006200"/>
</dbReference>
<dbReference type="Gramene" id="OsIR64_03g0006160.01">
    <property type="protein sequence ID" value="OsIR64_03g0006160.01"/>
    <property type="gene ID" value="OsIR64_03g0006160"/>
</dbReference>
<dbReference type="Gramene" id="OsKYG_03g0006240.02">
    <property type="protein sequence ID" value="OsKYG_03g0006240.02"/>
    <property type="gene ID" value="OsKYG_03g0006240"/>
</dbReference>
<dbReference type="Gramene" id="OsLaMu_03g0006210.01">
    <property type="protein sequence ID" value="OsLaMu_03g0006210.01"/>
    <property type="gene ID" value="OsLaMu_03g0006210"/>
</dbReference>
<dbReference type="Gramene" id="OsLima_03g0006190.01">
    <property type="protein sequence ID" value="OsLima_03g0006190.01"/>
    <property type="gene ID" value="OsLima_03g0006190"/>
</dbReference>
<dbReference type="Gramene" id="OsLiXu_03g0006220.01">
    <property type="protein sequence ID" value="OsLiXu_03g0006220.01"/>
    <property type="gene ID" value="OsLiXu_03g0006220"/>
</dbReference>
<dbReference type="Gramene" id="OsMH63_03G006190_01">
    <property type="protein sequence ID" value="OsMH63_03G006190_01"/>
    <property type="gene ID" value="OsMH63_03G006190"/>
</dbReference>
<dbReference type="Gramene" id="OsPr106_03g0006230.01">
    <property type="protein sequence ID" value="OsPr106_03g0006230.01"/>
    <property type="gene ID" value="OsPr106_03g0006230"/>
</dbReference>
<dbReference type="Gramene" id="OsZS97_03G006040_01">
    <property type="protein sequence ID" value="OsZS97_03G006040_01"/>
    <property type="gene ID" value="OsZS97_03G006040"/>
</dbReference>
<dbReference type="HOGENOM" id="CLU_018596_1_0_1"/>
<dbReference type="OMA" id="YDFELAY"/>
<dbReference type="OrthoDB" id="20198at2759"/>
<dbReference type="Proteomes" id="UP000007015">
    <property type="component" value="Chromosome 3"/>
</dbReference>
<dbReference type="GO" id="GO:0005664">
    <property type="term" value="C:nuclear origin of replication recognition complex"/>
    <property type="evidence" value="ECO:0007669"/>
    <property type="project" value="TreeGrafter"/>
</dbReference>
<dbReference type="GO" id="GO:0003688">
    <property type="term" value="F:DNA replication origin binding"/>
    <property type="evidence" value="ECO:0007669"/>
    <property type="project" value="TreeGrafter"/>
</dbReference>
<dbReference type="GO" id="GO:0006260">
    <property type="term" value="P:DNA replication"/>
    <property type="evidence" value="ECO:0007669"/>
    <property type="project" value="UniProtKB-KW"/>
</dbReference>
<dbReference type="InterPro" id="IPR007220">
    <property type="entry name" value="ORC2"/>
</dbReference>
<dbReference type="InterPro" id="IPR056772">
    <property type="entry name" value="RecA-like_ORC2"/>
</dbReference>
<dbReference type="InterPro" id="IPR056773">
    <property type="entry name" value="WHD_ORC2"/>
</dbReference>
<dbReference type="PANTHER" id="PTHR14052">
    <property type="entry name" value="ORIGIN RECOGNITION COMPLEX SUBUNIT 2"/>
    <property type="match status" value="1"/>
</dbReference>
<dbReference type="PANTHER" id="PTHR14052:SF0">
    <property type="entry name" value="ORIGIN RECOGNITION COMPLEX SUBUNIT 2"/>
    <property type="match status" value="1"/>
</dbReference>
<dbReference type="Pfam" id="PF04084">
    <property type="entry name" value="RecA-like_ORC2"/>
    <property type="match status" value="1"/>
</dbReference>
<dbReference type="Pfam" id="PF24882">
    <property type="entry name" value="WHD_ORC2"/>
    <property type="match status" value="1"/>
</dbReference>